<reference key="1">
    <citation type="journal article" date="2006" name="J. Bacteriol.">
        <title>Comparative genomic analysis of three strains of Ehrlichia ruminantium reveals an active process of genome size plasticity.</title>
        <authorList>
            <person name="Frutos R."/>
            <person name="Viari A."/>
            <person name="Ferraz C."/>
            <person name="Morgat A."/>
            <person name="Eychenie S."/>
            <person name="Kandassamy Y."/>
            <person name="Chantal I."/>
            <person name="Bensaid A."/>
            <person name="Coissac E."/>
            <person name="Vachiery N."/>
            <person name="Demaille J."/>
            <person name="Martinez D."/>
        </authorList>
    </citation>
    <scope>NUCLEOTIDE SEQUENCE [LARGE SCALE GENOMIC DNA]</scope>
    <source>
        <strain>Gardel</strain>
    </source>
</reference>
<organism>
    <name type="scientific">Ehrlichia ruminantium (strain Gardel)</name>
    <dbReference type="NCBI Taxonomy" id="302409"/>
    <lineage>
        <taxon>Bacteria</taxon>
        <taxon>Pseudomonadati</taxon>
        <taxon>Pseudomonadota</taxon>
        <taxon>Alphaproteobacteria</taxon>
        <taxon>Rickettsiales</taxon>
        <taxon>Anaplasmataceae</taxon>
        <taxon>Ehrlichia</taxon>
    </lineage>
</organism>
<name>COXZ_EHRRG</name>
<keyword id="KW-0997">Cell inner membrane</keyword>
<keyword id="KW-1003">Cell membrane</keyword>
<keyword id="KW-0186">Copper</keyword>
<keyword id="KW-0472">Membrane</keyword>
<keyword id="KW-0735">Signal-anchor</keyword>
<keyword id="KW-0812">Transmembrane</keyword>
<keyword id="KW-1133">Transmembrane helix</keyword>
<comment type="function">
    <text evidence="1">Exerts its effect at some terminal stage of cytochrome c oxidase synthesis, probably by being involved in the insertion of the copper B into subunit I.</text>
</comment>
<comment type="subcellular location">
    <subcellularLocation>
        <location evidence="1">Cell inner membrane</location>
        <topology evidence="1">Single-pass type II membrane protein</topology>
        <orientation evidence="1">Periplasmic side</orientation>
    </subcellularLocation>
</comment>
<comment type="similarity">
    <text evidence="1">Belongs to the COX11/CtaG family.</text>
</comment>
<proteinExistence type="inferred from homology"/>
<accession>Q5FGG9</accession>
<protein>
    <recommendedName>
        <fullName evidence="1">Cytochrome c oxidase assembly protein CtaG</fullName>
    </recommendedName>
</protein>
<evidence type="ECO:0000255" key="1">
    <source>
        <dbReference type="HAMAP-Rule" id="MF_00155"/>
    </source>
</evidence>
<feature type="chain" id="PRO_0000246136" description="Cytochrome c oxidase assembly protein CtaG">
    <location>
        <begin position="1"/>
        <end position="177"/>
    </location>
</feature>
<feature type="topological domain" description="Cytoplasmic" evidence="1">
    <location>
        <begin position="1"/>
        <end position="8"/>
    </location>
</feature>
<feature type="transmembrane region" description="Helical; Signal-anchor for type II membrane protein" evidence="1">
    <location>
        <begin position="9"/>
        <end position="29"/>
    </location>
</feature>
<feature type="topological domain" description="Periplasmic" evidence="1">
    <location>
        <begin position="30"/>
        <end position="177"/>
    </location>
</feature>
<dbReference type="EMBL" id="CR925677">
    <property type="protein sequence ID" value="CAI28298.1"/>
    <property type="molecule type" value="Genomic_DNA"/>
</dbReference>
<dbReference type="RefSeq" id="WP_011255901.1">
    <property type="nucleotide sequence ID" value="NC_006831.1"/>
</dbReference>
<dbReference type="SMR" id="Q5FGG9"/>
<dbReference type="KEGG" id="erg:ERGA_CDS_08460"/>
<dbReference type="HOGENOM" id="CLU_045000_5_0_5"/>
<dbReference type="OrthoDB" id="9804841at2"/>
<dbReference type="Proteomes" id="UP000000533">
    <property type="component" value="Chromosome"/>
</dbReference>
<dbReference type="GO" id="GO:0005886">
    <property type="term" value="C:plasma membrane"/>
    <property type="evidence" value="ECO:0007669"/>
    <property type="project" value="UniProtKB-SubCell"/>
</dbReference>
<dbReference type="GO" id="GO:0005507">
    <property type="term" value="F:copper ion binding"/>
    <property type="evidence" value="ECO:0007669"/>
    <property type="project" value="InterPro"/>
</dbReference>
<dbReference type="GO" id="GO:0008535">
    <property type="term" value="P:respiratory chain complex IV assembly"/>
    <property type="evidence" value="ECO:0007669"/>
    <property type="project" value="UniProtKB-UniRule"/>
</dbReference>
<dbReference type="FunFam" id="2.60.370.10:FF:000001">
    <property type="entry name" value="COX11 cytochrome c oxidase assembly homolog"/>
    <property type="match status" value="1"/>
</dbReference>
<dbReference type="Gene3D" id="2.60.370.10">
    <property type="entry name" value="Ctag/Cox11"/>
    <property type="match status" value="1"/>
</dbReference>
<dbReference type="HAMAP" id="MF_00155">
    <property type="entry name" value="CtaG"/>
    <property type="match status" value="1"/>
</dbReference>
<dbReference type="InterPro" id="IPR023471">
    <property type="entry name" value="CtaG/Cox11_dom_sf"/>
</dbReference>
<dbReference type="InterPro" id="IPR007533">
    <property type="entry name" value="Cyt_c_oxidase_assmbl_CtaG"/>
</dbReference>
<dbReference type="NCBIfam" id="NF003465">
    <property type="entry name" value="PRK05089.1"/>
    <property type="match status" value="1"/>
</dbReference>
<dbReference type="PANTHER" id="PTHR21320:SF3">
    <property type="entry name" value="CYTOCHROME C OXIDASE ASSEMBLY PROTEIN COX11, MITOCHONDRIAL-RELATED"/>
    <property type="match status" value="1"/>
</dbReference>
<dbReference type="PANTHER" id="PTHR21320">
    <property type="entry name" value="CYTOCHROME C OXIDASE ASSEMBLY PROTEIN COX11-RELATED"/>
    <property type="match status" value="1"/>
</dbReference>
<dbReference type="Pfam" id="PF04442">
    <property type="entry name" value="CtaG_Cox11"/>
    <property type="match status" value="1"/>
</dbReference>
<dbReference type="PIRSF" id="PIRSF005413">
    <property type="entry name" value="COX11"/>
    <property type="match status" value="1"/>
</dbReference>
<dbReference type="SUPFAM" id="SSF110111">
    <property type="entry name" value="Ctag/Cox11"/>
    <property type="match status" value="1"/>
</dbReference>
<gene>
    <name evidence="1" type="primary">ctaG</name>
    <name type="ordered locus">ERGA_CDS_08460</name>
</gene>
<sequence>MTQKAKNTIYLLILIILSMLCLVYASVPLYSIFCKVTGYGGTVRTATVTQSKLGKTTIKIRFNADINKELPWKFYPEIPYTTVKPGEQKLIFYRAENLTNEYVSGMAVYNVTPYKVGKYFNKVACFCFTKQTLSPYQKTIMPVSFFIDPNIETDPETSDVKLITLSYTFFKYKETTK</sequence>